<sequence length="420" mass="45461">MGIFEEAKKYIVGGVNSPVRAFKSVGGEPPFIEKGEGAYIYDINGNKYLDYIQSWGPLIFGHCDKDIEKAICNAVSKGVSFGAPTTVEVELAKEVLDLFPHLDLIRFVNSGTEATMSAIRVARGVSGKDDIIKFEGCYHGHSDSLLVSAGSGAATFGTPSSPGVPADFTKHTLLAKYNDIESVKKCFENGNVGCVIIEPIAGNMSLVPAEKEFLTELRELCTKNGAILIFDEVMSGFRAGLRGSYDVYGIEADIVTFGKVIGGGMPVGAFAGKKVIMEQLSPEGPIYQAGTLSGNPVAMSAGLAMLKKLKSNPELYKDLESKAKKLMKGFEEISKENGIDIQTNVVGSMFGFFFNSKKPKNFDDVNESDTKRYAKFHSEMLKRGFYFAPSAYETGFICTVMNDTDIDATLNAYKEIAPSL</sequence>
<reference key="1">
    <citation type="journal article" date="2009" name="PLoS Genet.">
        <title>Adaptations to submarine hydrothermal environments exemplified by the genome of Nautilia profundicola.</title>
        <authorList>
            <person name="Campbell B.J."/>
            <person name="Smith J.L."/>
            <person name="Hanson T.E."/>
            <person name="Klotz M.G."/>
            <person name="Stein L.Y."/>
            <person name="Lee C.K."/>
            <person name="Wu D."/>
            <person name="Robinson J.M."/>
            <person name="Khouri H.M."/>
            <person name="Eisen J.A."/>
            <person name="Cary S.C."/>
        </authorList>
    </citation>
    <scope>NUCLEOTIDE SEQUENCE [LARGE SCALE GENOMIC DNA]</scope>
    <source>
        <strain>ATCC BAA-1463 / DSM 18972 / AmH</strain>
    </source>
</reference>
<feature type="chain" id="PRO_0000382351" description="Glutamate-1-semialdehyde 2,1-aminomutase">
    <location>
        <begin position="1"/>
        <end position="420"/>
    </location>
</feature>
<feature type="modified residue" description="N6-(pyridoxal phosphate)lysine" evidence="1">
    <location>
        <position position="259"/>
    </location>
</feature>
<accession>B9LA83</accession>
<proteinExistence type="inferred from homology"/>
<name>GSA_NAUPA</name>
<keyword id="KW-0963">Cytoplasm</keyword>
<keyword id="KW-0413">Isomerase</keyword>
<keyword id="KW-0627">Porphyrin biosynthesis</keyword>
<keyword id="KW-0663">Pyridoxal phosphate</keyword>
<evidence type="ECO:0000255" key="1">
    <source>
        <dbReference type="HAMAP-Rule" id="MF_00375"/>
    </source>
</evidence>
<comment type="catalytic activity">
    <reaction evidence="1">
        <text>(S)-4-amino-5-oxopentanoate = 5-aminolevulinate</text>
        <dbReference type="Rhea" id="RHEA:14265"/>
        <dbReference type="ChEBI" id="CHEBI:57501"/>
        <dbReference type="ChEBI" id="CHEBI:356416"/>
        <dbReference type="EC" id="5.4.3.8"/>
    </reaction>
</comment>
<comment type="cofactor">
    <cofactor evidence="1">
        <name>pyridoxal 5'-phosphate</name>
        <dbReference type="ChEBI" id="CHEBI:597326"/>
    </cofactor>
</comment>
<comment type="pathway">
    <text evidence="1">Porphyrin-containing compound metabolism; protoporphyrin-IX biosynthesis; 5-aminolevulinate from L-glutamyl-tRNA(Glu): step 2/2.</text>
</comment>
<comment type="subunit">
    <text evidence="1">Homodimer.</text>
</comment>
<comment type="subcellular location">
    <subcellularLocation>
        <location evidence="1">Cytoplasm</location>
    </subcellularLocation>
</comment>
<comment type="similarity">
    <text evidence="1">Belongs to the class-III pyridoxal-phosphate-dependent aminotransferase family. HemL subfamily.</text>
</comment>
<protein>
    <recommendedName>
        <fullName evidence="1">Glutamate-1-semialdehyde 2,1-aminomutase</fullName>
        <shortName evidence="1">GSA</shortName>
        <ecNumber evidence="1">5.4.3.8</ecNumber>
    </recommendedName>
    <alternativeName>
        <fullName evidence="1">Glutamate-1-semialdehyde aminotransferase</fullName>
        <shortName evidence="1">GSA-AT</shortName>
    </alternativeName>
</protein>
<gene>
    <name evidence="1" type="primary">hemL</name>
    <name type="ordered locus">NAMH_1145</name>
</gene>
<dbReference type="EC" id="5.4.3.8" evidence="1"/>
<dbReference type="EMBL" id="CP001279">
    <property type="protein sequence ID" value="ACM93074.1"/>
    <property type="molecule type" value="Genomic_DNA"/>
</dbReference>
<dbReference type="RefSeq" id="WP_015902126.1">
    <property type="nucleotide sequence ID" value="NC_012115.1"/>
</dbReference>
<dbReference type="SMR" id="B9LA83"/>
<dbReference type="STRING" id="598659.NAMH_1145"/>
<dbReference type="KEGG" id="nam:NAMH_1145"/>
<dbReference type="eggNOG" id="COG0001">
    <property type="taxonomic scope" value="Bacteria"/>
</dbReference>
<dbReference type="HOGENOM" id="CLU_016922_1_5_7"/>
<dbReference type="OrthoDB" id="9801052at2"/>
<dbReference type="UniPathway" id="UPA00251">
    <property type="reaction ID" value="UER00317"/>
</dbReference>
<dbReference type="Proteomes" id="UP000000448">
    <property type="component" value="Chromosome"/>
</dbReference>
<dbReference type="GO" id="GO:0005737">
    <property type="term" value="C:cytoplasm"/>
    <property type="evidence" value="ECO:0007669"/>
    <property type="project" value="UniProtKB-SubCell"/>
</dbReference>
<dbReference type="GO" id="GO:0042286">
    <property type="term" value="F:glutamate-1-semialdehyde 2,1-aminomutase activity"/>
    <property type="evidence" value="ECO:0007669"/>
    <property type="project" value="UniProtKB-UniRule"/>
</dbReference>
<dbReference type="GO" id="GO:0030170">
    <property type="term" value="F:pyridoxal phosphate binding"/>
    <property type="evidence" value="ECO:0007669"/>
    <property type="project" value="InterPro"/>
</dbReference>
<dbReference type="GO" id="GO:0008483">
    <property type="term" value="F:transaminase activity"/>
    <property type="evidence" value="ECO:0007669"/>
    <property type="project" value="InterPro"/>
</dbReference>
<dbReference type="GO" id="GO:0006782">
    <property type="term" value="P:protoporphyrinogen IX biosynthetic process"/>
    <property type="evidence" value="ECO:0007669"/>
    <property type="project" value="UniProtKB-UniRule"/>
</dbReference>
<dbReference type="CDD" id="cd00610">
    <property type="entry name" value="OAT_like"/>
    <property type="match status" value="1"/>
</dbReference>
<dbReference type="FunFam" id="3.40.640.10:FF:000021">
    <property type="entry name" value="Glutamate-1-semialdehyde 2,1-aminomutase"/>
    <property type="match status" value="1"/>
</dbReference>
<dbReference type="Gene3D" id="3.90.1150.10">
    <property type="entry name" value="Aspartate Aminotransferase, domain 1"/>
    <property type="match status" value="1"/>
</dbReference>
<dbReference type="Gene3D" id="3.40.640.10">
    <property type="entry name" value="Type I PLP-dependent aspartate aminotransferase-like (Major domain)"/>
    <property type="match status" value="1"/>
</dbReference>
<dbReference type="HAMAP" id="MF_00375">
    <property type="entry name" value="HemL_aminotrans_3"/>
    <property type="match status" value="1"/>
</dbReference>
<dbReference type="InterPro" id="IPR004639">
    <property type="entry name" value="4pyrrol_synth_GluAld_NH2Trfase"/>
</dbReference>
<dbReference type="InterPro" id="IPR005814">
    <property type="entry name" value="Aminotrans_3"/>
</dbReference>
<dbReference type="InterPro" id="IPR049704">
    <property type="entry name" value="Aminotrans_3_PPA_site"/>
</dbReference>
<dbReference type="InterPro" id="IPR015424">
    <property type="entry name" value="PyrdxlP-dep_Trfase"/>
</dbReference>
<dbReference type="InterPro" id="IPR015421">
    <property type="entry name" value="PyrdxlP-dep_Trfase_major"/>
</dbReference>
<dbReference type="InterPro" id="IPR015422">
    <property type="entry name" value="PyrdxlP-dep_Trfase_small"/>
</dbReference>
<dbReference type="NCBIfam" id="TIGR00713">
    <property type="entry name" value="hemL"/>
    <property type="match status" value="1"/>
</dbReference>
<dbReference type="NCBIfam" id="NF000818">
    <property type="entry name" value="PRK00062.1"/>
    <property type="match status" value="1"/>
</dbReference>
<dbReference type="PANTHER" id="PTHR43713">
    <property type="entry name" value="GLUTAMATE-1-SEMIALDEHYDE 2,1-AMINOMUTASE"/>
    <property type="match status" value="1"/>
</dbReference>
<dbReference type="PANTHER" id="PTHR43713:SF3">
    <property type="entry name" value="GLUTAMATE-1-SEMIALDEHYDE 2,1-AMINOMUTASE 1, CHLOROPLASTIC-RELATED"/>
    <property type="match status" value="1"/>
</dbReference>
<dbReference type="Pfam" id="PF00202">
    <property type="entry name" value="Aminotran_3"/>
    <property type="match status" value="1"/>
</dbReference>
<dbReference type="SUPFAM" id="SSF53383">
    <property type="entry name" value="PLP-dependent transferases"/>
    <property type="match status" value="1"/>
</dbReference>
<dbReference type="PROSITE" id="PS00600">
    <property type="entry name" value="AA_TRANSFER_CLASS_3"/>
    <property type="match status" value="1"/>
</dbReference>
<organism>
    <name type="scientific">Nautilia profundicola (strain ATCC BAA-1463 / DSM 18972 / AmH)</name>
    <dbReference type="NCBI Taxonomy" id="598659"/>
    <lineage>
        <taxon>Bacteria</taxon>
        <taxon>Pseudomonadati</taxon>
        <taxon>Campylobacterota</taxon>
        <taxon>Epsilonproteobacteria</taxon>
        <taxon>Nautiliales</taxon>
        <taxon>Nautiliaceae</taxon>
        <taxon>Nautilia</taxon>
    </lineage>
</organism>